<feature type="chain" id="PRO_1000200178" description="Protein RnfH">
    <location>
        <begin position="1"/>
        <end position="96"/>
    </location>
</feature>
<accession>B5Z235</accession>
<organism>
    <name type="scientific">Escherichia coli O157:H7 (strain EC4115 / EHEC)</name>
    <dbReference type="NCBI Taxonomy" id="444450"/>
    <lineage>
        <taxon>Bacteria</taxon>
        <taxon>Pseudomonadati</taxon>
        <taxon>Pseudomonadota</taxon>
        <taxon>Gammaproteobacteria</taxon>
        <taxon>Enterobacterales</taxon>
        <taxon>Enterobacteriaceae</taxon>
        <taxon>Escherichia</taxon>
    </lineage>
</organism>
<dbReference type="EMBL" id="CP001164">
    <property type="protein sequence ID" value="ACI35742.1"/>
    <property type="molecule type" value="Genomic_DNA"/>
</dbReference>
<dbReference type="RefSeq" id="WP_001117844.1">
    <property type="nucleotide sequence ID" value="NC_011353.1"/>
</dbReference>
<dbReference type="SMR" id="B5Z235"/>
<dbReference type="KEGG" id="ecf:ECH74115_3858"/>
<dbReference type="HOGENOM" id="CLU_150721_1_0_6"/>
<dbReference type="Gene3D" id="3.10.20.280">
    <property type="entry name" value="RnfH-like"/>
    <property type="match status" value="1"/>
</dbReference>
<dbReference type="HAMAP" id="MF_00460">
    <property type="entry name" value="UPF0125_RnfH"/>
    <property type="match status" value="1"/>
</dbReference>
<dbReference type="InterPro" id="IPR016155">
    <property type="entry name" value="Mopterin_synth/thiamin_S_b"/>
</dbReference>
<dbReference type="InterPro" id="IPR005346">
    <property type="entry name" value="RnfH"/>
</dbReference>
<dbReference type="InterPro" id="IPR037021">
    <property type="entry name" value="RnfH_sf"/>
</dbReference>
<dbReference type="NCBIfam" id="NF002490">
    <property type="entry name" value="PRK01777.1"/>
    <property type="match status" value="1"/>
</dbReference>
<dbReference type="PANTHER" id="PTHR37483">
    <property type="entry name" value="UPF0125 PROTEIN RATB"/>
    <property type="match status" value="1"/>
</dbReference>
<dbReference type="PANTHER" id="PTHR37483:SF1">
    <property type="entry name" value="UPF0125 PROTEIN RATB"/>
    <property type="match status" value="1"/>
</dbReference>
<dbReference type="Pfam" id="PF03658">
    <property type="entry name" value="Ub-RnfH"/>
    <property type="match status" value="1"/>
</dbReference>
<dbReference type="SUPFAM" id="SSF54285">
    <property type="entry name" value="MoaD/ThiS"/>
    <property type="match status" value="1"/>
</dbReference>
<comment type="similarity">
    <text evidence="1">Belongs to the UPF0125 (RnfH) family.</text>
</comment>
<name>RNFH_ECO5E</name>
<evidence type="ECO:0000255" key="1">
    <source>
        <dbReference type="HAMAP-Rule" id="MF_00460"/>
    </source>
</evidence>
<proteinExistence type="inferred from homology"/>
<reference key="1">
    <citation type="journal article" date="2011" name="Proc. Natl. Acad. Sci. U.S.A.">
        <title>Genomic anatomy of Escherichia coli O157:H7 outbreaks.</title>
        <authorList>
            <person name="Eppinger M."/>
            <person name="Mammel M.K."/>
            <person name="Leclerc J.E."/>
            <person name="Ravel J."/>
            <person name="Cebula T.A."/>
        </authorList>
    </citation>
    <scope>NUCLEOTIDE SEQUENCE [LARGE SCALE GENOMIC DNA]</scope>
    <source>
        <strain>EC4115 / EHEC</strain>
    </source>
</reference>
<protein>
    <recommendedName>
        <fullName evidence="1">Protein RnfH</fullName>
    </recommendedName>
</protein>
<gene>
    <name evidence="1" type="primary">rnfH</name>
    <name type="ordered locus">ECH74115_3858</name>
</gene>
<sequence>MPGKIAVEVAYALPKKQYLQRVTLQEGATVEEAIRASGLLELRTDIDLTENKVGIYSRPAKLSDSVHDGDRVEIYRPLIADPKELRRQRAEKSANK</sequence>